<gene>
    <name evidence="1" type="primary">fabA</name>
    <name type="ordered locus">Tcr_1946</name>
</gene>
<protein>
    <recommendedName>
        <fullName evidence="1">3-hydroxydecanoyl-[acyl-carrier-protein] dehydratase</fullName>
        <ecNumber evidence="1">4.2.1.59</ecNumber>
    </recommendedName>
    <alternativeName>
        <fullName evidence="1">3-hydroxyacyl-[acyl-carrier-protein] dehydratase FabA</fullName>
    </alternativeName>
    <alternativeName>
        <fullName evidence="1">Beta-hydroxydecanoyl thioester dehydrase</fullName>
    </alternativeName>
    <alternativeName>
        <fullName evidence="1">Trans-2-decenoyl-[acyl-carrier-protein] isomerase</fullName>
        <ecNumber evidence="1">5.3.3.14</ecNumber>
    </alternativeName>
</protein>
<keyword id="KW-0963">Cytoplasm</keyword>
<keyword id="KW-0275">Fatty acid biosynthesis</keyword>
<keyword id="KW-0276">Fatty acid metabolism</keyword>
<keyword id="KW-0413">Isomerase</keyword>
<keyword id="KW-0444">Lipid biosynthesis</keyword>
<keyword id="KW-0443">Lipid metabolism</keyword>
<keyword id="KW-0456">Lyase</keyword>
<accession>Q31E87</accession>
<comment type="function">
    <text evidence="1">Necessary for the introduction of cis unsaturation into fatty acids. Catalyzes the dehydration of (3R)-3-hydroxydecanoyl-ACP to E-(2)-decenoyl-ACP and then its isomerization to Z-(3)-decenoyl-ACP. Can catalyze the dehydratase reaction for beta-hydroxyacyl-ACPs with saturated chain lengths up to 16:0, being most active on intermediate chain length.</text>
</comment>
<comment type="catalytic activity">
    <reaction evidence="1">
        <text>a (3R)-hydroxyacyl-[ACP] = a (2E)-enoyl-[ACP] + H2O</text>
        <dbReference type="Rhea" id="RHEA:13097"/>
        <dbReference type="Rhea" id="RHEA-COMP:9925"/>
        <dbReference type="Rhea" id="RHEA-COMP:9945"/>
        <dbReference type="ChEBI" id="CHEBI:15377"/>
        <dbReference type="ChEBI" id="CHEBI:78784"/>
        <dbReference type="ChEBI" id="CHEBI:78827"/>
        <dbReference type="EC" id="4.2.1.59"/>
    </reaction>
</comment>
<comment type="catalytic activity">
    <reaction evidence="1">
        <text>(3R)-hydroxydecanoyl-[ACP] = (2E)-decenoyl-[ACP] + H2O</text>
        <dbReference type="Rhea" id="RHEA:41860"/>
        <dbReference type="Rhea" id="RHEA-COMP:9638"/>
        <dbReference type="Rhea" id="RHEA-COMP:9639"/>
        <dbReference type="ChEBI" id="CHEBI:15377"/>
        <dbReference type="ChEBI" id="CHEBI:78466"/>
        <dbReference type="ChEBI" id="CHEBI:78467"/>
    </reaction>
</comment>
<comment type="catalytic activity">
    <reaction evidence="1">
        <text>(2E)-decenoyl-[ACP] = (3Z)-decenoyl-[ACP]</text>
        <dbReference type="Rhea" id="RHEA:23568"/>
        <dbReference type="Rhea" id="RHEA-COMP:9639"/>
        <dbReference type="Rhea" id="RHEA-COMP:9927"/>
        <dbReference type="ChEBI" id="CHEBI:78467"/>
        <dbReference type="ChEBI" id="CHEBI:78798"/>
        <dbReference type="EC" id="5.3.3.14"/>
    </reaction>
</comment>
<comment type="pathway">
    <text evidence="1">Lipid metabolism; fatty acid biosynthesis.</text>
</comment>
<comment type="subunit">
    <text evidence="1">Homodimer.</text>
</comment>
<comment type="subcellular location">
    <subcellularLocation>
        <location evidence="1">Cytoplasm</location>
    </subcellularLocation>
</comment>
<comment type="similarity">
    <text evidence="1">Belongs to the thioester dehydratase family. FabA subfamily.</text>
</comment>
<name>FABA_HYDCU</name>
<feature type="chain" id="PRO_0000267758" description="3-hydroxydecanoyl-[acyl-carrier-protein] dehydratase">
    <location>
        <begin position="1"/>
        <end position="171"/>
    </location>
</feature>
<feature type="active site" evidence="1">
    <location>
        <position position="70"/>
    </location>
</feature>
<proteinExistence type="inferred from homology"/>
<sequence>MEQQSSYNKEELLSCGRGELFGPGNAQLPLPPMLMFDRITHISEEGGAYGKGEIRAELDVKKDLWFFECHFNDDPVMPGCLGLDAMWQLIGFFLGWTGGPGRGRALGAGEVKFYGQVLPTAKKVEYVINMKRVIKRKLYMGIGDAHLYVDGREIYSADDLKVGLFTNTDNF</sequence>
<dbReference type="EC" id="4.2.1.59" evidence="1"/>
<dbReference type="EC" id="5.3.3.14" evidence="1"/>
<dbReference type="EMBL" id="CP000109">
    <property type="protein sequence ID" value="ABB42536.1"/>
    <property type="molecule type" value="Genomic_DNA"/>
</dbReference>
<dbReference type="SMR" id="Q31E87"/>
<dbReference type="STRING" id="317025.Tcr_1946"/>
<dbReference type="KEGG" id="tcx:Tcr_1946"/>
<dbReference type="eggNOG" id="COG0764">
    <property type="taxonomic scope" value="Bacteria"/>
</dbReference>
<dbReference type="HOGENOM" id="CLU_097925_0_0_6"/>
<dbReference type="OrthoDB" id="9786735at2"/>
<dbReference type="UniPathway" id="UPA00094"/>
<dbReference type="GO" id="GO:0005737">
    <property type="term" value="C:cytoplasm"/>
    <property type="evidence" value="ECO:0007669"/>
    <property type="project" value="UniProtKB-SubCell"/>
</dbReference>
<dbReference type="GO" id="GO:0019171">
    <property type="term" value="F:(3R)-hydroxyacyl-[acyl-carrier-protein] dehydratase activity"/>
    <property type="evidence" value="ECO:0007669"/>
    <property type="project" value="UniProtKB-UniRule"/>
</dbReference>
<dbReference type="GO" id="GO:0034017">
    <property type="term" value="F:trans-2-decenoyl-acyl-carrier-protein isomerase activity"/>
    <property type="evidence" value="ECO:0007669"/>
    <property type="project" value="UniProtKB-UniRule"/>
</dbReference>
<dbReference type="GO" id="GO:0006636">
    <property type="term" value="P:unsaturated fatty acid biosynthetic process"/>
    <property type="evidence" value="ECO:0007669"/>
    <property type="project" value="UniProtKB-UniRule"/>
</dbReference>
<dbReference type="CDD" id="cd01287">
    <property type="entry name" value="FabA"/>
    <property type="match status" value="1"/>
</dbReference>
<dbReference type="Gene3D" id="3.10.129.10">
    <property type="entry name" value="Hotdog Thioesterase"/>
    <property type="match status" value="1"/>
</dbReference>
<dbReference type="HAMAP" id="MF_00405">
    <property type="entry name" value="FabA"/>
    <property type="match status" value="1"/>
</dbReference>
<dbReference type="InterPro" id="IPR010083">
    <property type="entry name" value="FabA"/>
</dbReference>
<dbReference type="InterPro" id="IPR013114">
    <property type="entry name" value="FabA_FabZ"/>
</dbReference>
<dbReference type="InterPro" id="IPR029069">
    <property type="entry name" value="HotDog_dom_sf"/>
</dbReference>
<dbReference type="NCBIfam" id="TIGR01749">
    <property type="entry name" value="fabA"/>
    <property type="match status" value="1"/>
</dbReference>
<dbReference type="NCBIfam" id="NF003509">
    <property type="entry name" value="PRK05174.1"/>
    <property type="match status" value="1"/>
</dbReference>
<dbReference type="PANTHER" id="PTHR30272">
    <property type="entry name" value="3-HYDROXYACYL-[ACYL-CARRIER-PROTEIN] DEHYDRATASE"/>
    <property type="match status" value="1"/>
</dbReference>
<dbReference type="PANTHER" id="PTHR30272:SF8">
    <property type="entry name" value="3-HYDROXYDECANOYL-[ACYL-CARRIER-PROTEIN] DEHYDRATASE"/>
    <property type="match status" value="1"/>
</dbReference>
<dbReference type="Pfam" id="PF07977">
    <property type="entry name" value="FabA"/>
    <property type="match status" value="1"/>
</dbReference>
<dbReference type="SUPFAM" id="SSF54637">
    <property type="entry name" value="Thioesterase/thiol ester dehydrase-isomerase"/>
    <property type="match status" value="1"/>
</dbReference>
<organism>
    <name type="scientific">Hydrogenovibrio crunogenus (strain DSM 25203 / XCL-2)</name>
    <name type="common">Thiomicrospira crunogena</name>
    <dbReference type="NCBI Taxonomy" id="317025"/>
    <lineage>
        <taxon>Bacteria</taxon>
        <taxon>Pseudomonadati</taxon>
        <taxon>Pseudomonadota</taxon>
        <taxon>Gammaproteobacteria</taxon>
        <taxon>Thiotrichales</taxon>
        <taxon>Piscirickettsiaceae</taxon>
        <taxon>Hydrogenovibrio</taxon>
    </lineage>
</organism>
<evidence type="ECO:0000255" key="1">
    <source>
        <dbReference type="HAMAP-Rule" id="MF_00405"/>
    </source>
</evidence>
<reference key="1">
    <citation type="journal article" date="2006" name="PLoS Biol.">
        <title>The genome of deep-sea vent chemolithoautotroph Thiomicrospira crunogena XCL-2.</title>
        <authorList>
            <person name="Scott K.M."/>
            <person name="Sievert S.M."/>
            <person name="Abril F.N."/>
            <person name="Ball L.A."/>
            <person name="Barrett C.J."/>
            <person name="Blake R.A."/>
            <person name="Boller A.J."/>
            <person name="Chain P.S.G."/>
            <person name="Clark J.A."/>
            <person name="Davis C.R."/>
            <person name="Detter C."/>
            <person name="Do K.F."/>
            <person name="Dobrinski K.P."/>
            <person name="Faza B.I."/>
            <person name="Fitzpatrick K.A."/>
            <person name="Freyermuth S.K."/>
            <person name="Harmer T.L."/>
            <person name="Hauser L.J."/>
            <person name="Huegler M."/>
            <person name="Kerfeld C.A."/>
            <person name="Klotz M.G."/>
            <person name="Kong W.W."/>
            <person name="Land M."/>
            <person name="Lapidus A."/>
            <person name="Larimer F.W."/>
            <person name="Longo D.L."/>
            <person name="Lucas S."/>
            <person name="Malfatti S.A."/>
            <person name="Massey S.E."/>
            <person name="Martin D.D."/>
            <person name="McCuddin Z."/>
            <person name="Meyer F."/>
            <person name="Moore J.L."/>
            <person name="Ocampo L.H. Jr."/>
            <person name="Paul J.H."/>
            <person name="Paulsen I.T."/>
            <person name="Reep D.K."/>
            <person name="Ren Q."/>
            <person name="Ross R.L."/>
            <person name="Sato P.Y."/>
            <person name="Thomas P."/>
            <person name="Tinkham L.E."/>
            <person name="Zeruth G.T."/>
        </authorList>
    </citation>
    <scope>NUCLEOTIDE SEQUENCE [LARGE SCALE GENOMIC DNA]</scope>
    <source>
        <strain>DSM 25203 / XCL-2</strain>
    </source>
</reference>